<sequence>MSMTDPISDMLTRVRNGQNAGKVEVSMPSSKLKVSIARVLKEEGYIEDCKVIADAKPTLVIRLKYYGGKPVIEDIHRASRPGLRMYKSRDKLPRIRGGLGIAIVSTSRGVMTDKTARSIGEGGEVLCYVA</sequence>
<accession>Q3J8S8</accession>
<name>RS8_NITOC</name>
<protein>
    <recommendedName>
        <fullName evidence="1">Small ribosomal subunit protein uS8</fullName>
    </recommendedName>
    <alternativeName>
        <fullName evidence="2">30S ribosomal protein S8</fullName>
    </alternativeName>
</protein>
<gene>
    <name evidence="1" type="primary">rpsH</name>
    <name type="ordered locus">Noc_2310</name>
</gene>
<organism>
    <name type="scientific">Nitrosococcus oceani (strain ATCC 19707 / BCRC 17464 / JCM 30415 / NCIMB 11848 / C-107)</name>
    <dbReference type="NCBI Taxonomy" id="323261"/>
    <lineage>
        <taxon>Bacteria</taxon>
        <taxon>Pseudomonadati</taxon>
        <taxon>Pseudomonadota</taxon>
        <taxon>Gammaproteobacteria</taxon>
        <taxon>Chromatiales</taxon>
        <taxon>Chromatiaceae</taxon>
        <taxon>Nitrosococcus</taxon>
    </lineage>
</organism>
<dbReference type="EMBL" id="CP000127">
    <property type="protein sequence ID" value="ABA58768.1"/>
    <property type="molecule type" value="Genomic_DNA"/>
</dbReference>
<dbReference type="RefSeq" id="WP_011330919.1">
    <property type="nucleotide sequence ID" value="NC_007484.1"/>
</dbReference>
<dbReference type="SMR" id="Q3J8S8"/>
<dbReference type="FunCoup" id="Q3J8S8">
    <property type="interactions" value="555"/>
</dbReference>
<dbReference type="STRING" id="323261.Noc_2310"/>
<dbReference type="KEGG" id="noc:Noc_2310"/>
<dbReference type="eggNOG" id="COG0096">
    <property type="taxonomic scope" value="Bacteria"/>
</dbReference>
<dbReference type="HOGENOM" id="CLU_098428_0_0_6"/>
<dbReference type="InParanoid" id="Q3J8S8"/>
<dbReference type="Proteomes" id="UP000006838">
    <property type="component" value="Chromosome"/>
</dbReference>
<dbReference type="GO" id="GO:1990904">
    <property type="term" value="C:ribonucleoprotein complex"/>
    <property type="evidence" value="ECO:0007669"/>
    <property type="project" value="UniProtKB-KW"/>
</dbReference>
<dbReference type="GO" id="GO:0005840">
    <property type="term" value="C:ribosome"/>
    <property type="evidence" value="ECO:0007669"/>
    <property type="project" value="UniProtKB-KW"/>
</dbReference>
<dbReference type="GO" id="GO:0019843">
    <property type="term" value="F:rRNA binding"/>
    <property type="evidence" value="ECO:0007669"/>
    <property type="project" value="UniProtKB-UniRule"/>
</dbReference>
<dbReference type="GO" id="GO:0003735">
    <property type="term" value="F:structural constituent of ribosome"/>
    <property type="evidence" value="ECO:0007669"/>
    <property type="project" value="InterPro"/>
</dbReference>
<dbReference type="GO" id="GO:0006412">
    <property type="term" value="P:translation"/>
    <property type="evidence" value="ECO:0007669"/>
    <property type="project" value="UniProtKB-UniRule"/>
</dbReference>
<dbReference type="FunFam" id="3.30.1370.30:FF:000003">
    <property type="entry name" value="30S ribosomal protein S8"/>
    <property type="match status" value="1"/>
</dbReference>
<dbReference type="FunFam" id="3.30.1490.10:FF:000001">
    <property type="entry name" value="30S ribosomal protein S8"/>
    <property type="match status" value="1"/>
</dbReference>
<dbReference type="Gene3D" id="3.30.1370.30">
    <property type="match status" value="1"/>
</dbReference>
<dbReference type="Gene3D" id="3.30.1490.10">
    <property type="match status" value="1"/>
</dbReference>
<dbReference type="HAMAP" id="MF_01302_B">
    <property type="entry name" value="Ribosomal_uS8_B"/>
    <property type="match status" value="1"/>
</dbReference>
<dbReference type="InterPro" id="IPR000630">
    <property type="entry name" value="Ribosomal_uS8"/>
</dbReference>
<dbReference type="InterPro" id="IPR047863">
    <property type="entry name" value="Ribosomal_uS8_CS"/>
</dbReference>
<dbReference type="InterPro" id="IPR035987">
    <property type="entry name" value="Ribosomal_uS8_sf"/>
</dbReference>
<dbReference type="NCBIfam" id="NF001109">
    <property type="entry name" value="PRK00136.1"/>
    <property type="match status" value="1"/>
</dbReference>
<dbReference type="PANTHER" id="PTHR11758">
    <property type="entry name" value="40S RIBOSOMAL PROTEIN S15A"/>
    <property type="match status" value="1"/>
</dbReference>
<dbReference type="Pfam" id="PF00410">
    <property type="entry name" value="Ribosomal_S8"/>
    <property type="match status" value="1"/>
</dbReference>
<dbReference type="SUPFAM" id="SSF56047">
    <property type="entry name" value="Ribosomal protein S8"/>
    <property type="match status" value="1"/>
</dbReference>
<dbReference type="PROSITE" id="PS00053">
    <property type="entry name" value="RIBOSOMAL_S8"/>
    <property type="match status" value="1"/>
</dbReference>
<evidence type="ECO:0000255" key="1">
    <source>
        <dbReference type="HAMAP-Rule" id="MF_01302"/>
    </source>
</evidence>
<evidence type="ECO:0000305" key="2"/>
<reference key="1">
    <citation type="journal article" date="2006" name="Appl. Environ. Microbiol.">
        <title>Complete genome sequence of the marine, chemolithoautotrophic, ammonia-oxidizing bacterium Nitrosococcus oceani ATCC 19707.</title>
        <authorList>
            <person name="Klotz M.G."/>
            <person name="Arp D.J."/>
            <person name="Chain P.S.G."/>
            <person name="El-Sheikh A.F."/>
            <person name="Hauser L.J."/>
            <person name="Hommes N.G."/>
            <person name="Larimer F.W."/>
            <person name="Malfatti S.A."/>
            <person name="Norton J.M."/>
            <person name="Poret-Peterson A.T."/>
            <person name="Vergez L.M."/>
            <person name="Ward B.B."/>
        </authorList>
    </citation>
    <scope>NUCLEOTIDE SEQUENCE [LARGE SCALE GENOMIC DNA]</scope>
    <source>
        <strain>ATCC 19707 / BCRC 17464 / JCM 30415 / NCIMB 11848 / C-107</strain>
    </source>
</reference>
<proteinExistence type="inferred from homology"/>
<keyword id="KW-1185">Reference proteome</keyword>
<keyword id="KW-0687">Ribonucleoprotein</keyword>
<keyword id="KW-0689">Ribosomal protein</keyword>
<keyword id="KW-0694">RNA-binding</keyword>
<keyword id="KW-0699">rRNA-binding</keyword>
<comment type="function">
    <text evidence="1">One of the primary rRNA binding proteins, it binds directly to 16S rRNA central domain where it helps coordinate assembly of the platform of the 30S subunit.</text>
</comment>
<comment type="subunit">
    <text evidence="1">Part of the 30S ribosomal subunit. Contacts proteins S5 and S12.</text>
</comment>
<comment type="similarity">
    <text evidence="1">Belongs to the universal ribosomal protein uS8 family.</text>
</comment>
<feature type="chain" id="PRO_0000225877" description="Small ribosomal subunit protein uS8">
    <location>
        <begin position="1"/>
        <end position="130"/>
    </location>
</feature>